<gene>
    <name type="primary">MFAP4</name>
</gene>
<organism>
    <name type="scientific">Bos taurus</name>
    <name type="common">Bovine</name>
    <dbReference type="NCBI Taxonomy" id="9913"/>
    <lineage>
        <taxon>Eukaryota</taxon>
        <taxon>Metazoa</taxon>
        <taxon>Chordata</taxon>
        <taxon>Craniata</taxon>
        <taxon>Vertebrata</taxon>
        <taxon>Euteleostomi</taxon>
        <taxon>Mammalia</taxon>
        <taxon>Eutheria</taxon>
        <taxon>Laurasiatheria</taxon>
        <taxon>Artiodactyla</taxon>
        <taxon>Ruminantia</taxon>
        <taxon>Pecora</taxon>
        <taxon>Bovidae</taxon>
        <taxon>Bovinae</taxon>
        <taxon>Bos</taxon>
    </lineage>
</organism>
<keyword id="KW-0106">Calcium</keyword>
<keyword id="KW-0130">Cell adhesion</keyword>
<keyword id="KW-0903">Direct protein sequencing</keyword>
<keyword id="KW-0272">Extracellular matrix</keyword>
<keyword id="KW-0325">Glycoprotein</keyword>
<keyword id="KW-1185">Reference proteome</keyword>
<keyword id="KW-0964">Secreted</keyword>
<keyword id="KW-0732">Signal</keyword>
<proteinExistence type="evidence at protein level"/>
<evidence type="ECO:0000250" key="1">
    <source>
        <dbReference type="UniProtKB" id="P55083"/>
    </source>
</evidence>
<evidence type="ECO:0000255" key="2"/>
<evidence type="ECO:0000255" key="3">
    <source>
        <dbReference type="PROSITE-ProRule" id="PRU00739"/>
    </source>
</evidence>
<evidence type="ECO:0000305" key="4"/>
<feature type="signal peptide" evidence="2">
    <location>
        <begin position="1"/>
        <end position="20"/>
    </location>
</feature>
<feature type="chain" id="PRO_0000009133" description="Microfibril-associated glycoprotein 4">
    <location>
        <begin position="21"/>
        <end position="255"/>
    </location>
</feature>
<feature type="domain" description="Fibrinogen C-terminal" evidence="3">
    <location>
        <begin position="32"/>
        <end position="255"/>
    </location>
</feature>
<feature type="short sequence motif" description="Cell attachment site" evidence="2">
    <location>
        <begin position="26"/>
        <end position="28"/>
    </location>
</feature>
<feature type="glycosylation site" description="N-linked (GlcNAc...) asparagine" evidence="2">
    <location>
        <position position="87"/>
    </location>
</feature>
<feature type="glycosylation site" description="N-linked (GlcNAc...) asparagine" evidence="2">
    <location>
        <position position="137"/>
    </location>
</feature>
<feature type="sequence conflict" description="In Ref. 3; AA sequence." evidence="4" ref="3">
    <original>C</original>
    <variation>E</variation>
    <location>
        <position position="34"/>
    </location>
</feature>
<feature type="sequence conflict" description="In Ref. 3; AA sequence." evidence="4" ref="3">
    <original>C</original>
    <variation>E</variation>
    <location>
        <position position="41"/>
    </location>
</feature>
<name>MFAP4_BOVIN</name>
<comment type="function">
    <text evidence="1">Could be involved in calcium-dependent cell adhesion or intercellular interactions. May contribute to the elastic fiber assembly and/or maintenance.</text>
</comment>
<comment type="subunit">
    <text evidence="1">Homodimer. Can also form higher oligomers. Interacts with FBN1, FBN2 and LOX. Interacts with COL1A1 in a Ca (2+)-dependent manner. Interacts with ELN in a Ca (2+)-dependent manner; this interaction promotes ELN self-assembly.</text>
</comment>
<comment type="subcellular location">
    <subcellularLocation>
        <location evidence="1">Secreted</location>
        <location evidence="1">Extracellular space</location>
        <location evidence="1">Extracellular matrix</location>
    </subcellularLocation>
</comment>
<sequence length="255" mass="28558">MEALLVLPLLLLLSAGPCAPQLLGIRGDALEKSCLQLPLDCDDIYAQGYQADGVYLIYPSGPSVPVPVFCDMTTEGGKWTVFQKRFNGSVSFFRGWNDYKLGFGRADGEYWLGLQNMHLLTLKQKYELRVDLEDFENNTAFAKYADFSISPNAVSAEEDGYTLYVSGFEDGGAGDSLTYHSGQKFSTFDRDQDLFVQNCAALSSGAFWFRSCHFANLNGFYLGGSHLSYANGINWAQWKGFYYSLKRTEMKIRRA</sequence>
<reference key="1">
    <citation type="submission" date="2006-02" db="EMBL/GenBank/DDBJ databases">
        <authorList>
            <consortium name="NIH - Mammalian Gene Collection (MGC) project"/>
        </authorList>
    </citation>
    <scope>NUCLEOTIDE SEQUENCE [LARGE SCALE MRNA]</scope>
    <source>
        <strain>Hereford</strain>
        <tissue>Uterus</tissue>
    </source>
</reference>
<reference key="2">
    <citation type="submission" date="2002-11" db="EMBL/GenBank/DDBJ databases">
        <title>An integrated BTA19 linkage map including MFAP4.</title>
        <authorList>
            <person name="Asai-Coakwell M."/>
            <person name="Schmutz S.M."/>
            <person name="Berryere T.G."/>
        </authorList>
    </citation>
    <scope>NUCLEOTIDE SEQUENCE [MRNA] OF 16-239</scope>
    <source>
        <tissue>Skin</tissue>
    </source>
</reference>
<reference key="3">
    <citation type="journal article" date="1994" name="Biochem. Biophys. Res. Commun.">
        <title>Isolation and characterization of a 36-kDa microfibril-associated glycoprotein by the newly synthesized isoquinolinesulfonamide affinity chromatography.</title>
        <authorList>
            <person name="Kobayashi R."/>
            <person name="Mizutani A."/>
            <person name="Hidaka H."/>
        </authorList>
    </citation>
    <scope>PROTEIN SEQUENCE OF 33-62; 85-123 AND 126-184</scope>
    <source>
        <tissue>Aorta</tissue>
    </source>
</reference>
<accession>P55918</accession>
<accession>Q29S09</accession>
<accession>Q8HY48</accession>
<protein>
    <recommendedName>
        <fullName>Microfibril-associated glycoprotein 4</fullName>
    </recommendedName>
    <alternativeName>
        <fullName>36 kDa microfibril-associated glycoprotein</fullName>
        <shortName>36 kDa MAP</shortName>
    </alternativeName>
</protein>
<dbReference type="EMBL" id="BC113263">
    <property type="protein sequence ID" value="AAI13264.1"/>
    <property type="molecule type" value="mRNA"/>
</dbReference>
<dbReference type="EMBL" id="AY173052">
    <property type="protein sequence ID" value="AAN85410.1"/>
    <property type="molecule type" value="mRNA"/>
</dbReference>
<dbReference type="RefSeq" id="NP_001073686.1">
    <property type="nucleotide sequence ID" value="NM_001080217.1"/>
</dbReference>
<dbReference type="SMR" id="P55918"/>
<dbReference type="BioGRID" id="159902">
    <property type="interactions" value="1"/>
</dbReference>
<dbReference type="FunCoup" id="P55918">
    <property type="interactions" value="312"/>
</dbReference>
<dbReference type="STRING" id="9913.ENSBTAP00000008130"/>
<dbReference type="GlyCosmos" id="P55918">
    <property type="glycosylation" value="2 sites, No reported glycans"/>
</dbReference>
<dbReference type="GlyGen" id="P55918">
    <property type="glycosylation" value="2 sites"/>
</dbReference>
<dbReference type="PaxDb" id="9913-ENSBTAP00000008130"/>
<dbReference type="PeptideAtlas" id="P55918"/>
<dbReference type="Ensembl" id="ENSBTAT00000008130.4">
    <property type="protein sequence ID" value="ENSBTAP00000008130.3"/>
    <property type="gene ID" value="ENSBTAG00000006187.5"/>
</dbReference>
<dbReference type="GeneID" id="286766"/>
<dbReference type="KEGG" id="bta:286766"/>
<dbReference type="CTD" id="4239"/>
<dbReference type="VEuPathDB" id="HostDB:ENSBTAG00000006187"/>
<dbReference type="VGNC" id="VGNC:31424">
    <property type="gene designation" value="MFAP4"/>
</dbReference>
<dbReference type="eggNOG" id="KOG2579">
    <property type="taxonomic scope" value="Eukaryota"/>
</dbReference>
<dbReference type="GeneTree" id="ENSGT00940000154615"/>
<dbReference type="HOGENOM" id="CLU_038628_6_0_1"/>
<dbReference type="InParanoid" id="P55918"/>
<dbReference type="OMA" id="QPCGEDS"/>
<dbReference type="OrthoDB" id="9990035at2759"/>
<dbReference type="TreeFam" id="TF336658"/>
<dbReference type="Reactome" id="R-BTA-2129379">
    <property type="pathway name" value="Molecules associated with elastic fibres"/>
</dbReference>
<dbReference type="Proteomes" id="UP000009136">
    <property type="component" value="Chromosome 19"/>
</dbReference>
<dbReference type="Bgee" id="ENSBTAG00000006187">
    <property type="expression patterns" value="Expressed in trachea and 103 other cell types or tissues"/>
</dbReference>
<dbReference type="GO" id="GO:0062023">
    <property type="term" value="C:collagen-containing extracellular matrix"/>
    <property type="evidence" value="ECO:0000250"/>
    <property type="project" value="UniProtKB"/>
</dbReference>
<dbReference type="GO" id="GO:0071953">
    <property type="term" value="C:elastic fiber"/>
    <property type="evidence" value="ECO:0000314"/>
    <property type="project" value="BHF-UCL"/>
</dbReference>
<dbReference type="GO" id="GO:0005615">
    <property type="term" value="C:extracellular space"/>
    <property type="evidence" value="ECO:0000318"/>
    <property type="project" value="GO_Central"/>
</dbReference>
<dbReference type="GO" id="GO:0007155">
    <property type="term" value="P:cell adhesion"/>
    <property type="evidence" value="ECO:0007669"/>
    <property type="project" value="UniProtKB-KW"/>
</dbReference>
<dbReference type="GO" id="GO:0048251">
    <property type="term" value="P:elastic fiber assembly"/>
    <property type="evidence" value="ECO:0000318"/>
    <property type="project" value="GO_Central"/>
</dbReference>
<dbReference type="CDD" id="cd00087">
    <property type="entry name" value="FReD"/>
    <property type="match status" value="1"/>
</dbReference>
<dbReference type="FunFam" id="3.90.215.10:FF:000004">
    <property type="entry name" value="microfibril-associated glycoprotein 4"/>
    <property type="match status" value="1"/>
</dbReference>
<dbReference type="Gene3D" id="3.90.215.10">
    <property type="entry name" value="Gamma Fibrinogen, chain A, domain 1"/>
    <property type="match status" value="1"/>
</dbReference>
<dbReference type="InterPro" id="IPR036056">
    <property type="entry name" value="Fibrinogen-like_C"/>
</dbReference>
<dbReference type="InterPro" id="IPR014716">
    <property type="entry name" value="Fibrinogen_a/b/g_C_1"/>
</dbReference>
<dbReference type="InterPro" id="IPR002181">
    <property type="entry name" value="Fibrinogen_a/b/g_C_dom"/>
</dbReference>
<dbReference type="InterPro" id="IPR050373">
    <property type="entry name" value="Fibrinogen_C-term_domain"/>
</dbReference>
<dbReference type="NCBIfam" id="NF040941">
    <property type="entry name" value="GGGWT_bact"/>
    <property type="match status" value="1"/>
</dbReference>
<dbReference type="PANTHER" id="PTHR19143">
    <property type="entry name" value="FIBRINOGEN/TENASCIN/ANGIOPOEITIN"/>
    <property type="match status" value="1"/>
</dbReference>
<dbReference type="PANTHER" id="PTHR19143:SF225">
    <property type="entry name" value="MICROFIBRIL-ASSOCIATED GLYCOPROTEIN 4"/>
    <property type="match status" value="1"/>
</dbReference>
<dbReference type="Pfam" id="PF00147">
    <property type="entry name" value="Fibrinogen_C"/>
    <property type="match status" value="1"/>
</dbReference>
<dbReference type="SMART" id="SM00186">
    <property type="entry name" value="FBG"/>
    <property type="match status" value="1"/>
</dbReference>
<dbReference type="SUPFAM" id="SSF56496">
    <property type="entry name" value="Fibrinogen C-terminal domain-like"/>
    <property type="match status" value="1"/>
</dbReference>
<dbReference type="PROSITE" id="PS51406">
    <property type="entry name" value="FIBRINOGEN_C_2"/>
    <property type="match status" value="1"/>
</dbReference>